<keyword id="KW-0066">ATP synthesis</keyword>
<keyword id="KW-0997">Cell inner membrane</keyword>
<keyword id="KW-1003">Cell membrane</keyword>
<keyword id="KW-0139">CF(1)</keyword>
<keyword id="KW-0375">Hydrogen ion transport</keyword>
<keyword id="KW-0406">Ion transport</keyword>
<keyword id="KW-0472">Membrane</keyword>
<keyword id="KW-1185">Reference proteome</keyword>
<keyword id="KW-0813">Transport</keyword>
<reference key="1">
    <citation type="journal article" date="2008" name="Proc. Natl. Acad. Sci. U.S.A.">
        <title>Nitrogen fixation island and rhizosphere competence traits in the genome of root-associated Pseudomonas stutzeri A1501.</title>
        <authorList>
            <person name="Yan Y."/>
            <person name="Yang J."/>
            <person name="Dou Y."/>
            <person name="Chen M."/>
            <person name="Ping S."/>
            <person name="Peng J."/>
            <person name="Lu W."/>
            <person name="Zhang W."/>
            <person name="Yao Z."/>
            <person name="Li H."/>
            <person name="Liu W."/>
            <person name="He S."/>
            <person name="Geng L."/>
            <person name="Zhang X."/>
            <person name="Yang F."/>
            <person name="Yu H."/>
            <person name="Zhan Y."/>
            <person name="Li D."/>
            <person name="Lin Z."/>
            <person name="Wang Y."/>
            <person name="Elmerich C."/>
            <person name="Lin M."/>
            <person name="Jin Q."/>
        </authorList>
    </citation>
    <scope>NUCLEOTIDE SEQUENCE [LARGE SCALE GENOMIC DNA]</scope>
    <source>
        <strain>A1501</strain>
    </source>
</reference>
<feature type="chain" id="PRO_1000053297" description="ATP synthase gamma chain">
    <location>
        <begin position="1"/>
        <end position="288"/>
    </location>
</feature>
<evidence type="ECO:0000255" key="1">
    <source>
        <dbReference type="HAMAP-Rule" id="MF_00815"/>
    </source>
</evidence>
<organism>
    <name type="scientific">Stutzerimonas stutzeri (strain A1501)</name>
    <name type="common">Pseudomonas stutzeri</name>
    <dbReference type="NCBI Taxonomy" id="379731"/>
    <lineage>
        <taxon>Bacteria</taxon>
        <taxon>Pseudomonadati</taxon>
        <taxon>Pseudomonadota</taxon>
        <taxon>Gammaproteobacteria</taxon>
        <taxon>Pseudomonadales</taxon>
        <taxon>Pseudomonadaceae</taxon>
        <taxon>Stutzerimonas</taxon>
    </lineage>
</organism>
<dbReference type="EMBL" id="CP000304">
    <property type="protein sequence ID" value="ABP81814.1"/>
    <property type="molecule type" value="Genomic_DNA"/>
</dbReference>
<dbReference type="RefSeq" id="WP_011915192.1">
    <property type="nucleotide sequence ID" value="NC_009434.1"/>
</dbReference>
<dbReference type="SMR" id="A4VS63"/>
<dbReference type="GeneID" id="66823486"/>
<dbReference type="KEGG" id="psa:PST_4192"/>
<dbReference type="eggNOG" id="COG0224">
    <property type="taxonomic scope" value="Bacteria"/>
</dbReference>
<dbReference type="HOGENOM" id="CLU_050669_0_1_6"/>
<dbReference type="Proteomes" id="UP000000233">
    <property type="component" value="Chromosome"/>
</dbReference>
<dbReference type="GO" id="GO:0005886">
    <property type="term" value="C:plasma membrane"/>
    <property type="evidence" value="ECO:0007669"/>
    <property type="project" value="UniProtKB-SubCell"/>
</dbReference>
<dbReference type="GO" id="GO:0045259">
    <property type="term" value="C:proton-transporting ATP synthase complex"/>
    <property type="evidence" value="ECO:0007669"/>
    <property type="project" value="UniProtKB-KW"/>
</dbReference>
<dbReference type="GO" id="GO:0005524">
    <property type="term" value="F:ATP binding"/>
    <property type="evidence" value="ECO:0007669"/>
    <property type="project" value="UniProtKB-UniRule"/>
</dbReference>
<dbReference type="GO" id="GO:0046933">
    <property type="term" value="F:proton-transporting ATP synthase activity, rotational mechanism"/>
    <property type="evidence" value="ECO:0007669"/>
    <property type="project" value="UniProtKB-UniRule"/>
</dbReference>
<dbReference type="GO" id="GO:0042777">
    <property type="term" value="P:proton motive force-driven plasma membrane ATP synthesis"/>
    <property type="evidence" value="ECO:0007669"/>
    <property type="project" value="UniProtKB-UniRule"/>
</dbReference>
<dbReference type="CDD" id="cd12151">
    <property type="entry name" value="F1-ATPase_gamma"/>
    <property type="match status" value="1"/>
</dbReference>
<dbReference type="FunFam" id="1.10.287.80:FF:000005">
    <property type="entry name" value="ATP synthase gamma chain"/>
    <property type="match status" value="1"/>
</dbReference>
<dbReference type="FunFam" id="3.40.1380.10:FF:000001">
    <property type="entry name" value="ATP synthase gamma chain"/>
    <property type="match status" value="1"/>
</dbReference>
<dbReference type="Gene3D" id="3.40.1380.10">
    <property type="match status" value="1"/>
</dbReference>
<dbReference type="Gene3D" id="1.10.287.80">
    <property type="entry name" value="ATP synthase, gamma subunit, helix hairpin domain"/>
    <property type="match status" value="1"/>
</dbReference>
<dbReference type="HAMAP" id="MF_00815">
    <property type="entry name" value="ATP_synth_gamma_bact"/>
    <property type="match status" value="1"/>
</dbReference>
<dbReference type="InterPro" id="IPR035968">
    <property type="entry name" value="ATP_synth_F1_ATPase_gsu"/>
</dbReference>
<dbReference type="InterPro" id="IPR000131">
    <property type="entry name" value="ATP_synth_F1_gsu"/>
</dbReference>
<dbReference type="InterPro" id="IPR023632">
    <property type="entry name" value="ATP_synth_F1_gsu_CS"/>
</dbReference>
<dbReference type="NCBIfam" id="TIGR01146">
    <property type="entry name" value="ATPsyn_F1gamma"/>
    <property type="match status" value="1"/>
</dbReference>
<dbReference type="NCBIfam" id="NF004144">
    <property type="entry name" value="PRK05621.1-1"/>
    <property type="match status" value="1"/>
</dbReference>
<dbReference type="PANTHER" id="PTHR11693">
    <property type="entry name" value="ATP SYNTHASE GAMMA CHAIN"/>
    <property type="match status" value="1"/>
</dbReference>
<dbReference type="PANTHER" id="PTHR11693:SF22">
    <property type="entry name" value="ATP SYNTHASE SUBUNIT GAMMA, MITOCHONDRIAL"/>
    <property type="match status" value="1"/>
</dbReference>
<dbReference type="Pfam" id="PF00231">
    <property type="entry name" value="ATP-synt"/>
    <property type="match status" value="1"/>
</dbReference>
<dbReference type="PRINTS" id="PR00126">
    <property type="entry name" value="ATPASEGAMMA"/>
</dbReference>
<dbReference type="SUPFAM" id="SSF52943">
    <property type="entry name" value="ATP synthase (F1-ATPase), gamma subunit"/>
    <property type="match status" value="1"/>
</dbReference>
<dbReference type="PROSITE" id="PS00153">
    <property type="entry name" value="ATPASE_GAMMA"/>
    <property type="match status" value="1"/>
</dbReference>
<name>ATPG_STUS1</name>
<sequence length="288" mass="31772">MAGAKEIRSKIASIKSTQKITSAMEKVAVSKMRKAQMRMAASRPYAERIRQVIGHLAYANPEYRHPFMVERPVKRVGYIVVSTDRGLCGGLNINLFKVLIKNMKEWHDQKVEVDLCVIGNKGASFFRSFGGNVVAAIGNLGEEPSINDLIGSVKVMLDGFHEGRIDRLYLVSNKFINTMTQKPTLDQLLPLAADDSAEPVKKGQWDYLYEPDAQQLLDALLVRFIESQVYQAVVENGAAEQAARMIAMKNATDNAGELISDLQLVYNKARQAAITQEISEIVGGAAAV</sequence>
<protein>
    <recommendedName>
        <fullName evidence="1">ATP synthase gamma chain</fullName>
    </recommendedName>
    <alternativeName>
        <fullName evidence="1">ATP synthase F1 sector gamma subunit</fullName>
    </alternativeName>
    <alternativeName>
        <fullName evidence="1">F-ATPase gamma subunit</fullName>
    </alternativeName>
</protein>
<accession>A4VS63</accession>
<comment type="function">
    <text evidence="1">Produces ATP from ADP in the presence of a proton gradient across the membrane. The gamma chain is believed to be important in regulating ATPase activity and the flow of protons through the CF(0) complex.</text>
</comment>
<comment type="subunit">
    <text evidence="1">F-type ATPases have 2 components, CF(1) - the catalytic core - and CF(0) - the membrane proton channel. CF(1) has five subunits: alpha(3), beta(3), gamma(1), delta(1), epsilon(1). CF(0) has three main subunits: a, b and c.</text>
</comment>
<comment type="subcellular location">
    <subcellularLocation>
        <location evidence="1">Cell inner membrane</location>
        <topology evidence="1">Peripheral membrane protein</topology>
    </subcellularLocation>
</comment>
<comment type="similarity">
    <text evidence="1">Belongs to the ATPase gamma chain family.</text>
</comment>
<proteinExistence type="inferred from homology"/>
<gene>
    <name evidence="1" type="primary">atpG</name>
    <name type="ordered locus">PST_4192</name>
</gene>